<sequence>MSVTLSRKLIDYVKLAKPKVVSLLDVVAIASYILAFKGNWYNLIPVLIGGSIAAGGSMIINGGLEIEKDKVMKRTSWRPTVKGEVGRKEAYMVGGIACALGSLIGLLANPLTAFFILLGSLVYVFVYSYYLKPRTWLNIVIGGFAGSAAAWAGYAAASNSFNLESLLLGLLVFAWTPGHFWALALRYKRDYANAEIPMLPAIVDDKTAARAIAISNILMIPFALGLMLYLNLIYVIITLAATAVLLYFNVRLMRNPTPEESWISYKFSAPYLAIVMIAAVISFIL</sequence>
<name>COXX_SULAC</name>
<proteinExistence type="inferred from homology"/>
<evidence type="ECO:0000255" key="1">
    <source>
        <dbReference type="HAMAP-Rule" id="MF_00154"/>
    </source>
</evidence>
<feature type="chain" id="PRO_0000346095" description="Protoheme IX farnesyltransferase">
    <location>
        <begin position="1"/>
        <end position="285"/>
    </location>
</feature>
<feature type="transmembrane region" description="Helical" evidence="1">
    <location>
        <begin position="16"/>
        <end position="36"/>
    </location>
</feature>
<feature type="transmembrane region" description="Helical" evidence="1">
    <location>
        <begin position="40"/>
        <end position="60"/>
    </location>
</feature>
<feature type="transmembrane region" description="Helical" evidence="1">
    <location>
        <begin position="106"/>
        <end position="126"/>
    </location>
</feature>
<feature type="transmembrane region" description="Helical" evidence="1">
    <location>
        <begin position="136"/>
        <end position="156"/>
    </location>
</feature>
<feature type="transmembrane region" description="Helical" evidence="1">
    <location>
        <begin position="165"/>
        <end position="185"/>
    </location>
</feature>
<feature type="transmembrane region" description="Helical" evidence="1">
    <location>
        <begin position="217"/>
        <end position="237"/>
    </location>
</feature>
<feature type="transmembrane region" description="Helical" evidence="1">
    <location>
        <begin position="265"/>
        <end position="285"/>
    </location>
</feature>
<dbReference type="EC" id="2.5.1.141" evidence="1"/>
<dbReference type="EMBL" id="CP000077">
    <property type="protein sequence ID" value="AAY80946.1"/>
    <property type="molecule type" value="Genomic_DNA"/>
</dbReference>
<dbReference type="RefSeq" id="WP_011278448.1">
    <property type="nucleotide sequence ID" value="NC_007181.1"/>
</dbReference>
<dbReference type="SMR" id="Q4J8E4"/>
<dbReference type="STRING" id="330779.Saci_1635"/>
<dbReference type="GeneID" id="14552127"/>
<dbReference type="KEGG" id="sai:Saci_1635"/>
<dbReference type="PATRIC" id="fig|330779.12.peg.1571"/>
<dbReference type="eggNOG" id="arCOG00479">
    <property type="taxonomic scope" value="Archaea"/>
</dbReference>
<dbReference type="HOGENOM" id="CLU_029631_0_1_2"/>
<dbReference type="UniPathway" id="UPA00834">
    <property type="reaction ID" value="UER00712"/>
</dbReference>
<dbReference type="Proteomes" id="UP000001018">
    <property type="component" value="Chromosome"/>
</dbReference>
<dbReference type="GO" id="GO:0005886">
    <property type="term" value="C:plasma membrane"/>
    <property type="evidence" value="ECO:0007669"/>
    <property type="project" value="UniProtKB-SubCell"/>
</dbReference>
<dbReference type="GO" id="GO:0008495">
    <property type="term" value="F:protoheme IX farnesyltransferase activity"/>
    <property type="evidence" value="ECO:0007669"/>
    <property type="project" value="UniProtKB-UniRule"/>
</dbReference>
<dbReference type="GO" id="GO:0048034">
    <property type="term" value="P:heme O biosynthetic process"/>
    <property type="evidence" value="ECO:0007669"/>
    <property type="project" value="UniProtKB-UniRule"/>
</dbReference>
<dbReference type="CDD" id="cd13957">
    <property type="entry name" value="PT_UbiA_Cox10"/>
    <property type="match status" value="1"/>
</dbReference>
<dbReference type="Gene3D" id="1.10.357.140">
    <property type="entry name" value="UbiA prenyltransferase"/>
    <property type="match status" value="1"/>
</dbReference>
<dbReference type="HAMAP" id="MF_00154">
    <property type="entry name" value="CyoE_CtaB"/>
    <property type="match status" value="1"/>
</dbReference>
<dbReference type="InterPro" id="IPR006369">
    <property type="entry name" value="Protohaem_IX_farnesylTrfase"/>
</dbReference>
<dbReference type="InterPro" id="IPR000537">
    <property type="entry name" value="UbiA_prenyltransferase"/>
</dbReference>
<dbReference type="InterPro" id="IPR044878">
    <property type="entry name" value="UbiA_sf"/>
</dbReference>
<dbReference type="NCBIfam" id="TIGR01473">
    <property type="entry name" value="cyoE_ctaB"/>
    <property type="match status" value="1"/>
</dbReference>
<dbReference type="PANTHER" id="PTHR43448">
    <property type="entry name" value="PROTOHEME IX FARNESYLTRANSFERASE, MITOCHONDRIAL"/>
    <property type="match status" value="1"/>
</dbReference>
<dbReference type="PANTHER" id="PTHR43448:SF2">
    <property type="entry name" value="PROTOHEME IX FARNESYLTRANSFERASE, MITOCHONDRIAL"/>
    <property type="match status" value="1"/>
</dbReference>
<dbReference type="Pfam" id="PF01040">
    <property type="entry name" value="UbiA"/>
    <property type="match status" value="1"/>
</dbReference>
<gene>
    <name evidence="1" type="primary">ctaB</name>
    <name type="ordered locus">Saci_1635</name>
</gene>
<reference key="1">
    <citation type="journal article" date="2005" name="J. Bacteriol.">
        <title>The genome of Sulfolobus acidocaldarius, a model organism of the Crenarchaeota.</title>
        <authorList>
            <person name="Chen L."/>
            <person name="Bruegger K."/>
            <person name="Skovgaard M."/>
            <person name="Redder P."/>
            <person name="She Q."/>
            <person name="Torarinsson E."/>
            <person name="Greve B."/>
            <person name="Awayez M."/>
            <person name="Zibat A."/>
            <person name="Klenk H.-P."/>
            <person name="Garrett R.A."/>
        </authorList>
    </citation>
    <scope>NUCLEOTIDE SEQUENCE [LARGE SCALE GENOMIC DNA]</scope>
    <source>
        <strain>ATCC 33909 / DSM 639 / JCM 8929 / NBRC 15157 / NCIMB 11770</strain>
    </source>
</reference>
<keyword id="KW-1003">Cell membrane</keyword>
<keyword id="KW-0350">Heme biosynthesis</keyword>
<keyword id="KW-0472">Membrane</keyword>
<keyword id="KW-1185">Reference proteome</keyword>
<keyword id="KW-0808">Transferase</keyword>
<keyword id="KW-0812">Transmembrane</keyword>
<keyword id="KW-1133">Transmembrane helix</keyword>
<accession>Q4J8E4</accession>
<protein>
    <recommendedName>
        <fullName evidence="1">Protoheme IX farnesyltransferase</fullName>
        <ecNumber evidence="1">2.5.1.141</ecNumber>
    </recommendedName>
    <alternativeName>
        <fullName evidence="1">Heme B farnesyltransferase</fullName>
    </alternativeName>
    <alternativeName>
        <fullName evidence="1">Heme O synthase</fullName>
    </alternativeName>
</protein>
<comment type="function">
    <text evidence="1">Converts heme B (protoheme IX) to heme O by substitution of the vinyl group on carbon 2 of heme B porphyrin ring with a hydroxyethyl farnesyl side group.</text>
</comment>
<comment type="catalytic activity">
    <reaction evidence="1">
        <text>heme b + (2E,6E)-farnesyl diphosphate + H2O = Fe(II)-heme o + diphosphate</text>
        <dbReference type="Rhea" id="RHEA:28070"/>
        <dbReference type="ChEBI" id="CHEBI:15377"/>
        <dbReference type="ChEBI" id="CHEBI:33019"/>
        <dbReference type="ChEBI" id="CHEBI:60344"/>
        <dbReference type="ChEBI" id="CHEBI:60530"/>
        <dbReference type="ChEBI" id="CHEBI:175763"/>
        <dbReference type="EC" id="2.5.1.141"/>
    </reaction>
</comment>
<comment type="pathway">
    <text evidence="1">Porphyrin-containing compound metabolism; heme O biosynthesis; heme O from protoheme: step 1/1.</text>
</comment>
<comment type="subcellular location">
    <subcellularLocation>
        <location evidence="1">Cell membrane</location>
        <topology evidence="1">Multi-pass membrane protein</topology>
    </subcellularLocation>
</comment>
<comment type="miscellaneous">
    <text evidence="1">Carbon 2 of the heme B porphyrin ring is defined according to the Fischer nomenclature.</text>
</comment>
<comment type="similarity">
    <text evidence="1">Belongs to the UbiA prenyltransferase family. Protoheme IX farnesyltransferase subfamily.</text>
</comment>
<organism>
    <name type="scientific">Sulfolobus acidocaldarius (strain ATCC 33909 / DSM 639 / JCM 8929 / NBRC 15157 / NCIMB 11770)</name>
    <dbReference type="NCBI Taxonomy" id="330779"/>
    <lineage>
        <taxon>Archaea</taxon>
        <taxon>Thermoproteota</taxon>
        <taxon>Thermoprotei</taxon>
        <taxon>Sulfolobales</taxon>
        <taxon>Sulfolobaceae</taxon>
        <taxon>Sulfolobus</taxon>
    </lineage>
</organism>